<evidence type="ECO:0000255" key="1">
    <source>
        <dbReference type="HAMAP-Rule" id="MF_00567"/>
    </source>
</evidence>
<keyword id="KW-0004">4Fe-4S</keyword>
<keyword id="KW-0963">Cytoplasm</keyword>
<keyword id="KW-0408">Iron</keyword>
<keyword id="KW-0411">Iron-sulfur</keyword>
<keyword id="KW-0479">Metal-binding</keyword>
<keyword id="KW-0662">Pyridine nucleotide biosynthesis</keyword>
<keyword id="KW-0808">Transferase</keyword>
<dbReference type="EC" id="2.5.1.72" evidence="1"/>
<dbReference type="EMBL" id="CP000526">
    <property type="protein sequence ID" value="ABM50034.1"/>
    <property type="molecule type" value="Genomic_DNA"/>
</dbReference>
<dbReference type="RefSeq" id="WP_004185886.1">
    <property type="nucleotide sequence ID" value="NC_008785.1"/>
</dbReference>
<dbReference type="SMR" id="A1V6U5"/>
<dbReference type="GeneID" id="93059425"/>
<dbReference type="KEGG" id="bmv:BMASAVP1_A2651"/>
<dbReference type="HOGENOM" id="CLU_047382_1_0_4"/>
<dbReference type="UniPathway" id="UPA00253">
    <property type="reaction ID" value="UER00327"/>
</dbReference>
<dbReference type="GO" id="GO:0005829">
    <property type="term" value="C:cytosol"/>
    <property type="evidence" value="ECO:0007669"/>
    <property type="project" value="TreeGrafter"/>
</dbReference>
<dbReference type="GO" id="GO:0051539">
    <property type="term" value="F:4 iron, 4 sulfur cluster binding"/>
    <property type="evidence" value="ECO:0007669"/>
    <property type="project" value="UniProtKB-KW"/>
</dbReference>
<dbReference type="GO" id="GO:0046872">
    <property type="term" value="F:metal ion binding"/>
    <property type="evidence" value="ECO:0007669"/>
    <property type="project" value="UniProtKB-KW"/>
</dbReference>
<dbReference type="GO" id="GO:0008987">
    <property type="term" value="F:quinolinate synthetase A activity"/>
    <property type="evidence" value="ECO:0007669"/>
    <property type="project" value="UniProtKB-UniRule"/>
</dbReference>
<dbReference type="GO" id="GO:0034628">
    <property type="term" value="P:'de novo' NAD biosynthetic process from L-aspartate"/>
    <property type="evidence" value="ECO:0007669"/>
    <property type="project" value="TreeGrafter"/>
</dbReference>
<dbReference type="FunFam" id="3.40.50.10800:FF:000001">
    <property type="entry name" value="Quinolinate synthase A"/>
    <property type="match status" value="1"/>
</dbReference>
<dbReference type="FunFam" id="3.40.50.10800:FF:000003">
    <property type="entry name" value="Quinolinate synthase A"/>
    <property type="match status" value="1"/>
</dbReference>
<dbReference type="Gene3D" id="3.40.50.10800">
    <property type="entry name" value="NadA-like"/>
    <property type="match status" value="3"/>
</dbReference>
<dbReference type="HAMAP" id="MF_00567">
    <property type="entry name" value="NadA_type1"/>
    <property type="match status" value="1"/>
</dbReference>
<dbReference type="InterPro" id="IPR003473">
    <property type="entry name" value="NadA"/>
</dbReference>
<dbReference type="InterPro" id="IPR036094">
    <property type="entry name" value="NadA_sf"/>
</dbReference>
<dbReference type="InterPro" id="IPR023513">
    <property type="entry name" value="Quinolinate_synth_A_type1"/>
</dbReference>
<dbReference type="NCBIfam" id="TIGR00550">
    <property type="entry name" value="nadA"/>
    <property type="match status" value="1"/>
</dbReference>
<dbReference type="NCBIfam" id="NF006877">
    <property type="entry name" value="PRK09375.1-1"/>
    <property type="match status" value="1"/>
</dbReference>
<dbReference type="NCBIfam" id="NF006878">
    <property type="entry name" value="PRK09375.1-2"/>
    <property type="match status" value="1"/>
</dbReference>
<dbReference type="PANTHER" id="PTHR30573:SF0">
    <property type="entry name" value="QUINOLINATE SYNTHASE, CHLOROPLASTIC"/>
    <property type="match status" value="1"/>
</dbReference>
<dbReference type="PANTHER" id="PTHR30573">
    <property type="entry name" value="QUINOLINATE SYNTHETASE A"/>
    <property type="match status" value="1"/>
</dbReference>
<dbReference type="Pfam" id="PF02445">
    <property type="entry name" value="NadA"/>
    <property type="match status" value="1"/>
</dbReference>
<dbReference type="SUPFAM" id="SSF142754">
    <property type="entry name" value="NadA-like"/>
    <property type="match status" value="1"/>
</dbReference>
<comment type="function">
    <text evidence="1">Catalyzes the condensation of iminoaspartate with dihydroxyacetone phosphate to form quinolinate.</text>
</comment>
<comment type="catalytic activity">
    <reaction evidence="1">
        <text>iminosuccinate + dihydroxyacetone phosphate = quinolinate + phosphate + 2 H2O + H(+)</text>
        <dbReference type="Rhea" id="RHEA:25888"/>
        <dbReference type="ChEBI" id="CHEBI:15377"/>
        <dbReference type="ChEBI" id="CHEBI:15378"/>
        <dbReference type="ChEBI" id="CHEBI:29959"/>
        <dbReference type="ChEBI" id="CHEBI:43474"/>
        <dbReference type="ChEBI" id="CHEBI:57642"/>
        <dbReference type="ChEBI" id="CHEBI:77875"/>
        <dbReference type="EC" id="2.5.1.72"/>
    </reaction>
    <physiologicalReaction direction="left-to-right" evidence="1">
        <dbReference type="Rhea" id="RHEA:25889"/>
    </physiologicalReaction>
</comment>
<comment type="cofactor">
    <cofactor evidence="1">
        <name>[4Fe-4S] cluster</name>
        <dbReference type="ChEBI" id="CHEBI:49883"/>
    </cofactor>
    <text evidence="1">Binds 1 [4Fe-4S] cluster per subunit.</text>
</comment>
<comment type="pathway">
    <text evidence="1">Cofactor biosynthesis; NAD(+) biosynthesis; quinolinate from iminoaspartate: step 1/1.</text>
</comment>
<comment type="subcellular location">
    <subcellularLocation>
        <location evidence="1">Cytoplasm</location>
    </subcellularLocation>
</comment>
<comment type="similarity">
    <text evidence="1">Belongs to the quinolinate synthase family. Type 1 subfamily.</text>
</comment>
<protein>
    <recommendedName>
        <fullName evidence="1">Quinolinate synthase</fullName>
        <ecNumber evidence="1">2.5.1.72</ecNumber>
    </recommendedName>
</protein>
<organism>
    <name type="scientific">Burkholderia mallei (strain SAVP1)</name>
    <dbReference type="NCBI Taxonomy" id="320388"/>
    <lineage>
        <taxon>Bacteria</taxon>
        <taxon>Pseudomonadati</taxon>
        <taxon>Pseudomonadota</taxon>
        <taxon>Betaproteobacteria</taxon>
        <taxon>Burkholderiales</taxon>
        <taxon>Burkholderiaceae</taxon>
        <taxon>Burkholderia</taxon>
        <taxon>pseudomallei group</taxon>
    </lineage>
</organism>
<name>NADA_BURMS</name>
<feature type="chain" id="PRO_1000024947" description="Quinolinate synthase">
    <location>
        <begin position="1"/>
        <end position="378"/>
    </location>
</feature>
<feature type="binding site" evidence="1">
    <location>
        <position position="59"/>
    </location>
    <ligand>
        <name>iminosuccinate</name>
        <dbReference type="ChEBI" id="CHEBI:77875"/>
    </ligand>
</feature>
<feature type="binding site" evidence="1">
    <location>
        <position position="80"/>
    </location>
    <ligand>
        <name>iminosuccinate</name>
        <dbReference type="ChEBI" id="CHEBI:77875"/>
    </ligand>
</feature>
<feature type="binding site" evidence="1">
    <location>
        <position position="125"/>
    </location>
    <ligand>
        <name>[4Fe-4S] cluster</name>
        <dbReference type="ChEBI" id="CHEBI:49883"/>
    </ligand>
</feature>
<feature type="binding site" evidence="1">
    <location>
        <begin position="151"/>
        <end position="153"/>
    </location>
    <ligand>
        <name>iminosuccinate</name>
        <dbReference type="ChEBI" id="CHEBI:77875"/>
    </ligand>
</feature>
<feature type="binding site" evidence="1">
    <location>
        <position position="168"/>
    </location>
    <ligand>
        <name>iminosuccinate</name>
        <dbReference type="ChEBI" id="CHEBI:77875"/>
    </ligand>
</feature>
<feature type="binding site" evidence="1">
    <location>
        <position position="212"/>
    </location>
    <ligand>
        <name>[4Fe-4S] cluster</name>
        <dbReference type="ChEBI" id="CHEBI:49883"/>
    </ligand>
</feature>
<feature type="binding site" evidence="1">
    <location>
        <begin position="238"/>
        <end position="240"/>
    </location>
    <ligand>
        <name>iminosuccinate</name>
        <dbReference type="ChEBI" id="CHEBI:77875"/>
    </ligand>
</feature>
<feature type="binding site" evidence="1">
    <location>
        <position position="255"/>
    </location>
    <ligand>
        <name>iminosuccinate</name>
        <dbReference type="ChEBI" id="CHEBI:77875"/>
    </ligand>
</feature>
<feature type="binding site" evidence="1">
    <location>
        <position position="309"/>
    </location>
    <ligand>
        <name>[4Fe-4S] cluster</name>
        <dbReference type="ChEBI" id="CHEBI:49883"/>
    </ligand>
</feature>
<reference key="1">
    <citation type="journal article" date="2010" name="Genome Biol. Evol.">
        <title>Continuing evolution of Burkholderia mallei through genome reduction and large-scale rearrangements.</title>
        <authorList>
            <person name="Losada L."/>
            <person name="Ronning C.M."/>
            <person name="DeShazer D."/>
            <person name="Woods D."/>
            <person name="Fedorova N."/>
            <person name="Kim H.S."/>
            <person name="Shabalina S.A."/>
            <person name="Pearson T.R."/>
            <person name="Brinkac L."/>
            <person name="Tan P."/>
            <person name="Nandi T."/>
            <person name="Crabtree J."/>
            <person name="Badger J."/>
            <person name="Beckstrom-Sternberg S."/>
            <person name="Saqib M."/>
            <person name="Schutzer S.E."/>
            <person name="Keim P."/>
            <person name="Nierman W.C."/>
        </authorList>
    </citation>
    <scope>NUCLEOTIDE SEQUENCE [LARGE SCALE GENOMIC DNA]</scope>
    <source>
        <strain>SAVP1</strain>
    </source>
</reference>
<proteinExistence type="inferred from homology"/>
<accession>A1V6U5</accession>
<gene>
    <name evidence="1" type="primary">nadA</name>
    <name type="ordered locus">BMASAVP1_A2651</name>
</gene>
<sequence length="378" mass="40828">MQSAIKSVEYDRPLAAGAACGVGEAWAKVPDALAPDERDALKARIKALLVREKAVLVAHYYVDADLQALADETGGCVADSLEMARFGRDHDAHTLVVAGVRFMGETAKILSPGKRVLMPDLDATCSLDLGCPVDEFSQFCDAHPERTVVVYANTSAAVKARADWMVTSSIGLEIVADLHARGEKIIWAPDRHLGGYIQKKTGADMLMWQGSCLVHDEFKGIELDLLRHEYPDAKILVHPESPEGVVALADVVGSTTQLIDAAVKLDAQRFIVATDLGILHKMRLAAPGKTFIEAPTAGNSATCKSCAHCPWMAMNALSNLADVLERGHNEIFVEAAIAQRARMPIDRMLDFAARHKQRVQASGDLQRDQALFANVGAA</sequence>